<organism>
    <name type="scientific">Escherichia fergusonii (strain ATCC 35469 / DSM 13698 / CCUG 18766 / IAM 14443 / JCM 21226 / LMG 7866 / NBRC 102419 / NCTC 12128 / CDC 0568-73)</name>
    <dbReference type="NCBI Taxonomy" id="585054"/>
    <lineage>
        <taxon>Bacteria</taxon>
        <taxon>Pseudomonadati</taxon>
        <taxon>Pseudomonadota</taxon>
        <taxon>Gammaproteobacteria</taxon>
        <taxon>Enterobacterales</taxon>
        <taxon>Enterobacteriaceae</taxon>
        <taxon>Escherichia</taxon>
    </lineage>
</organism>
<comment type="function">
    <text evidence="1">DEAD-box RNA helicase involved in RNA degradation. Has RNA-dependent ATPase activity and unwinds double-stranded RNA.</text>
</comment>
<comment type="catalytic activity">
    <reaction evidence="1">
        <text>ATP + H2O = ADP + phosphate + H(+)</text>
        <dbReference type="Rhea" id="RHEA:13065"/>
        <dbReference type="ChEBI" id="CHEBI:15377"/>
        <dbReference type="ChEBI" id="CHEBI:15378"/>
        <dbReference type="ChEBI" id="CHEBI:30616"/>
        <dbReference type="ChEBI" id="CHEBI:43474"/>
        <dbReference type="ChEBI" id="CHEBI:456216"/>
        <dbReference type="EC" id="3.6.4.13"/>
    </reaction>
</comment>
<comment type="subunit">
    <text evidence="1">Component of the RNA degradosome, which is a multiprotein complex involved in RNA processing and mRNA degradation.</text>
</comment>
<comment type="subcellular location">
    <subcellularLocation>
        <location evidence="1">Cytoplasm</location>
    </subcellularLocation>
</comment>
<comment type="similarity">
    <text evidence="1">Belongs to the DEAD box helicase family. RhlB subfamily.</text>
</comment>
<keyword id="KW-0067">ATP-binding</keyword>
<keyword id="KW-0963">Cytoplasm</keyword>
<keyword id="KW-0347">Helicase</keyword>
<keyword id="KW-0378">Hydrolase</keyword>
<keyword id="KW-0547">Nucleotide-binding</keyword>
<keyword id="KW-0694">RNA-binding</keyword>
<gene>
    <name evidence="1" type="primary">rhlB</name>
    <name type="ordered locus">EFER_3724</name>
</gene>
<name>RHLB_ESCF3</name>
<accession>B7LU75</accession>
<sequence length="421" mass="47125">MSKTHLTEQKFSDFALHPKVVEALEKKGFHNCTPIQALALPLTLAGRDVAGQAQTGTGKTMAFLTSTFHYLLSHPAIADRKVNQPRALIMAPTRELAVQIHADAEPLAQATGLKLGLAYGGDGYDKQLKVLESGVDILIGTTGRLIDYAKQNHINLGAIQVVVLDEADRMYDLGFIKDIRWLFRRMPPANQRLNMLFSATLSYRVRELAFEQMNNAEYIEVEPEQKTGHRIKEELFYPSNEEKMRLLQTLIEEEWPDRAIIFANTKHRCEEIWGHLAADGHRVGLLTGDVAQKKRLRILDEFTRGDLDILVATDVAARGLHIPAVTHVFNYDLPDDCEDYVHRIGRTGRAGASGHSISLACEEYALNLPAIETYIGHSIPVSKYNPDALMTDLPKPLRLTRPRTGNGPRRTGAPRNRRRSG</sequence>
<proteinExistence type="inferred from homology"/>
<feature type="chain" id="PRO_1000131295" description="ATP-dependent RNA helicase RhlB">
    <location>
        <begin position="1"/>
        <end position="421"/>
    </location>
</feature>
<feature type="domain" description="Helicase ATP-binding" evidence="1">
    <location>
        <begin position="40"/>
        <end position="219"/>
    </location>
</feature>
<feature type="domain" description="Helicase C-terminal" evidence="1">
    <location>
        <begin position="245"/>
        <end position="390"/>
    </location>
</feature>
<feature type="region of interest" description="Disordered" evidence="2">
    <location>
        <begin position="392"/>
        <end position="421"/>
    </location>
</feature>
<feature type="short sequence motif" description="Q motif">
    <location>
        <begin position="9"/>
        <end position="37"/>
    </location>
</feature>
<feature type="short sequence motif" description="DEAD box">
    <location>
        <begin position="165"/>
        <end position="168"/>
    </location>
</feature>
<feature type="compositionally biased region" description="Low complexity" evidence="2">
    <location>
        <begin position="402"/>
        <end position="414"/>
    </location>
</feature>
<feature type="binding site" evidence="1">
    <location>
        <begin position="53"/>
        <end position="60"/>
    </location>
    <ligand>
        <name>ATP</name>
        <dbReference type="ChEBI" id="CHEBI:30616"/>
    </ligand>
</feature>
<evidence type="ECO:0000255" key="1">
    <source>
        <dbReference type="HAMAP-Rule" id="MF_00661"/>
    </source>
</evidence>
<evidence type="ECO:0000256" key="2">
    <source>
        <dbReference type="SAM" id="MobiDB-lite"/>
    </source>
</evidence>
<protein>
    <recommendedName>
        <fullName evidence="1">ATP-dependent RNA helicase RhlB</fullName>
        <ecNumber evidence="1">3.6.4.13</ecNumber>
    </recommendedName>
</protein>
<dbReference type="EC" id="3.6.4.13" evidence="1"/>
<dbReference type="EMBL" id="CU928158">
    <property type="protein sequence ID" value="CAQ91184.1"/>
    <property type="molecule type" value="Genomic_DNA"/>
</dbReference>
<dbReference type="RefSeq" id="WP_000047508.1">
    <property type="nucleotide sequence ID" value="NC_011740.1"/>
</dbReference>
<dbReference type="SMR" id="B7LU75"/>
<dbReference type="GeneID" id="75059669"/>
<dbReference type="KEGG" id="efe:EFER_3724"/>
<dbReference type="HOGENOM" id="CLU_003041_1_3_6"/>
<dbReference type="OrthoDB" id="9805696at2"/>
<dbReference type="Proteomes" id="UP000000745">
    <property type="component" value="Chromosome"/>
</dbReference>
<dbReference type="GO" id="GO:0005829">
    <property type="term" value="C:cytosol"/>
    <property type="evidence" value="ECO:0007669"/>
    <property type="project" value="TreeGrafter"/>
</dbReference>
<dbReference type="GO" id="GO:0005524">
    <property type="term" value="F:ATP binding"/>
    <property type="evidence" value="ECO:0007669"/>
    <property type="project" value="UniProtKB-UniRule"/>
</dbReference>
<dbReference type="GO" id="GO:0016887">
    <property type="term" value="F:ATP hydrolysis activity"/>
    <property type="evidence" value="ECO:0007669"/>
    <property type="project" value="RHEA"/>
</dbReference>
<dbReference type="GO" id="GO:0003723">
    <property type="term" value="F:RNA binding"/>
    <property type="evidence" value="ECO:0007669"/>
    <property type="project" value="UniProtKB-UniRule"/>
</dbReference>
<dbReference type="GO" id="GO:0003724">
    <property type="term" value="F:RNA helicase activity"/>
    <property type="evidence" value="ECO:0007669"/>
    <property type="project" value="UniProtKB-UniRule"/>
</dbReference>
<dbReference type="GO" id="GO:0006401">
    <property type="term" value="P:RNA catabolic process"/>
    <property type="evidence" value="ECO:0007669"/>
    <property type="project" value="UniProtKB-UniRule"/>
</dbReference>
<dbReference type="CDD" id="cd00268">
    <property type="entry name" value="DEADc"/>
    <property type="match status" value="1"/>
</dbReference>
<dbReference type="CDD" id="cd18787">
    <property type="entry name" value="SF2_C_DEAD"/>
    <property type="match status" value="1"/>
</dbReference>
<dbReference type="FunFam" id="3.40.50.300:FF:000008">
    <property type="entry name" value="ATP-dependent RNA helicase RhlB"/>
    <property type="match status" value="1"/>
</dbReference>
<dbReference type="FunFam" id="3.40.50.300:FF:000312">
    <property type="entry name" value="ATP-dependent RNA helicase RhlB"/>
    <property type="match status" value="1"/>
</dbReference>
<dbReference type="Gene3D" id="3.40.50.300">
    <property type="entry name" value="P-loop containing nucleotide triphosphate hydrolases"/>
    <property type="match status" value="2"/>
</dbReference>
<dbReference type="HAMAP" id="MF_00661">
    <property type="entry name" value="DEAD_helicase_RhlB"/>
    <property type="match status" value="1"/>
</dbReference>
<dbReference type="InterPro" id="IPR011545">
    <property type="entry name" value="DEAD/DEAH_box_helicase_dom"/>
</dbReference>
<dbReference type="InterPro" id="IPR050079">
    <property type="entry name" value="DEAD_box_RNA_helicase"/>
</dbReference>
<dbReference type="InterPro" id="IPR014001">
    <property type="entry name" value="Helicase_ATP-bd"/>
</dbReference>
<dbReference type="InterPro" id="IPR001650">
    <property type="entry name" value="Helicase_C-like"/>
</dbReference>
<dbReference type="InterPro" id="IPR027417">
    <property type="entry name" value="P-loop_NTPase"/>
</dbReference>
<dbReference type="InterPro" id="IPR000629">
    <property type="entry name" value="RNA-helicase_DEAD-box_CS"/>
</dbReference>
<dbReference type="InterPro" id="IPR023554">
    <property type="entry name" value="RNA_helicase_ATP-dep_RhlB"/>
</dbReference>
<dbReference type="InterPro" id="IPR014014">
    <property type="entry name" value="RNA_helicase_DEAD_Q_motif"/>
</dbReference>
<dbReference type="NCBIfam" id="NF003419">
    <property type="entry name" value="PRK04837.1"/>
    <property type="match status" value="1"/>
</dbReference>
<dbReference type="PANTHER" id="PTHR47959:SF10">
    <property type="entry name" value="ATP-DEPENDENT RNA HELICASE RHLB"/>
    <property type="match status" value="1"/>
</dbReference>
<dbReference type="PANTHER" id="PTHR47959">
    <property type="entry name" value="ATP-DEPENDENT RNA HELICASE RHLE-RELATED"/>
    <property type="match status" value="1"/>
</dbReference>
<dbReference type="Pfam" id="PF00270">
    <property type="entry name" value="DEAD"/>
    <property type="match status" value="1"/>
</dbReference>
<dbReference type="Pfam" id="PF00271">
    <property type="entry name" value="Helicase_C"/>
    <property type="match status" value="1"/>
</dbReference>
<dbReference type="SMART" id="SM00487">
    <property type="entry name" value="DEXDc"/>
    <property type="match status" value="1"/>
</dbReference>
<dbReference type="SMART" id="SM00490">
    <property type="entry name" value="HELICc"/>
    <property type="match status" value="1"/>
</dbReference>
<dbReference type="SUPFAM" id="SSF52540">
    <property type="entry name" value="P-loop containing nucleoside triphosphate hydrolases"/>
    <property type="match status" value="1"/>
</dbReference>
<dbReference type="PROSITE" id="PS00039">
    <property type="entry name" value="DEAD_ATP_HELICASE"/>
    <property type="match status" value="1"/>
</dbReference>
<dbReference type="PROSITE" id="PS51192">
    <property type="entry name" value="HELICASE_ATP_BIND_1"/>
    <property type="match status" value="1"/>
</dbReference>
<dbReference type="PROSITE" id="PS51194">
    <property type="entry name" value="HELICASE_CTER"/>
    <property type="match status" value="1"/>
</dbReference>
<dbReference type="PROSITE" id="PS51195">
    <property type="entry name" value="Q_MOTIF"/>
    <property type="match status" value="1"/>
</dbReference>
<reference key="1">
    <citation type="journal article" date="2009" name="PLoS Genet.">
        <title>Organised genome dynamics in the Escherichia coli species results in highly diverse adaptive paths.</title>
        <authorList>
            <person name="Touchon M."/>
            <person name="Hoede C."/>
            <person name="Tenaillon O."/>
            <person name="Barbe V."/>
            <person name="Baeriswyl S."/>
            <person name="Bidet P."/>
            <person name="Bingen E."/>
            <person name="Bonacorsi S."/>
            <person name="Bouchier C."/>
            <person name="Bouvet O."/>
            <person name="Calteau A."/>
            <person name="Chiapello H."/>
            <person name="Clermont O."/>
            <person name="Cruveiller S."/>
            <person name="Danchin A."/>
            <person name="Diard M."/>
            <person name="Dossat C."/>
            <person name="Karoui M.E."/>
            <person name="Frapy E."/>
            <person name="Garry L."/>
            <person name="Ghigo J.M."/>
            <person name="Gilles A.M."/>
            <person name="Johnson J."/>
            <person name="Le Bouguenec C."/>
            <person name="Lescat M."/>
            <person name="Mangenot S."/>
            <person name="Martinez-Jehanne V."/>
            <person name="Matic I."/>
            <person name="Nassif X."/>
            <person name="Oztas S."/>
            <person name="Petit M.A."/>
            <person name="Pichon C."/>
            <person name="Rouy Z."/>
            <person name="Ruf C.S."/>
            <person name="Schneider D."/>
            <person name="Tourret J."/>
            <person name="Vacherie B."/>
            <person name="Vallenet D."/>
            <person name="Medigue C."/>
            <person name="Rocha E.P.C."/>
            <person name="Denamur E."/>
        </authorList>
    </citation>
    <scope>NUCLEOTIDE SEQUENCE [LARGE SCALE GENOMIC DNA]</scope>
    <source>
        <strain>ATCC 35469 / DSM 13698 / BCRC 15582 / CCUG 18766 / IAM 14443 / JCM 21226 / LMG 7866 / NBRC 102419 / NCTC 12128 / CDC 0568-73</strain>
    </source>
</reference>